<organism>
    <name type="scientific">Aspergillus giganteus</name>
    <dbReference type="NCBI Taxonomy" id="5060"/>
    <lineage>
        <taxon>Eukaryota</taxon>
        <taxon>Fungi</taxon>
        <taxon>Dikarya</taxon>
        <taxon>Ascomycota</taxon>
        <taxon>Pezizomycotina</taxon>
        <taxon>Eurotiomycetes</taxon>
        <taxon>Eurotiomycetidae</taxon>
        <taxon>Eurotiales</taxon>
        <taxon>Aspergillaceae</taxon>
        <taxon>Aspergillus</taxon>
        <taxon>Aspergillus subgen. Fumigati</taxon>
    </lineage>
</organism>
<dbReference type="EMBL" id="AY763122">
    <property type="protein sequence ID" value="AAV28549.1"/>
    <property type="molecule type" value="Genomic_DNA"/>
</dbReference>
<dbReference type="GO" id="GO:0005737">
    <property type="term" value="C:cytoplasm"/>
    <property type="evidence" value="ECO:0007669"/>
    <property type="project" value="UniProtKB-SubCell"/>
</dbReference>
<dbReference type="GO" id="GO:0005634">
    <property type="term" value="C:nucleus"/>
    <property type="evidence" value="ECO:0007669"/>
    <property type="project" value="UniProtKB-SubCell"/>
</dbReference>
<dbReference type="GO" id="GO:0003677">
    <property type="term" value="F:DNA binding"/>
    <property type="evidence" value="ECO:0007669"/>
    <property type="project" value="UniProtKB-KW"/>
</dbReference>
<dbReference type="GO" id="GO:0008270">
    <property type="term" value="F:zinc ion binding"/>
    <property type="evidence" value="ECO:0007669"/>
    <property type="project" value="UniProtKB-KW"/>
</dbReference>
<dbReference type="GO" id="GO:0045944">
    <property type="term" value="P:positive regulation of transcription by RNA polymerase II"/>
    <property type="evidence" value="ECO:0007669"/>
    <property type="project" value="TreeGrafter"/>
</dbReference>
<dbReference type="FunFam" id="3.30.160.60:FF:000993">
    <property type="entry name" value="pH-response transcription factor pacC/RIM101"/>
    <property type="match status" value="1"/>
</dbReference>
<dbReference type="FunFam" id="3.30.160.60:FF:001369">
    <property type="entry name" value="pH-response transcription factor pacC/RIM101"/>
    <property type="match status" value="1"/>
</dbReference>
<dbReference type="Gene3D" id="3.30.160.60">
    <property type="entry name" value="Classic Zinc Finger"/>
    <property type="match status" value="2"/>
</dbReference>
<dbReference type="InterPro" id="IPR050806">
    <property type="entry name" value="pacC/RIM101"/>
</dbReference>
<dbReference type="InterPro" id="IPR036236">
    <property type="entry name" value="Znf_C2H2_sf"/>
</dbReference>
<dbReference type="InterPro" id="IPR013087">
    <property type="entry name" value="Znf_C2H2_type"/>
</dbReference>
<dbReference type="PANTHER" id="PTHR47257">
    <property type="entry name" value="PH-RESPONSE TRANSCRIPTION FACTOR PACC/RIM101"/>
    <property type="match status" value="1"/>
</dbReference>
<dbReference type="PANTHER" id="PTHR47257:SF1">
    <property type="entry name" value="PH-RESPONSE TRANSCRIPTION FACTOR PACC_RIM101"/>
    <property type="match status" value="1"/>
</dbReference>
<dbReference type="Pfam" id="PF00096">
    <property type="entry name" value="zf-C2H2"/>
    <property type="match status" value="1"/>
</dbReference>
<dbReference type="SMART" id="SM00355">
    <property type="entry name" value="ZnF_C2H2"/>
    <property type="match status" value="3"/>
</dbReference>
<dbReference type="SUPFAM" id="SSF57667">
    <property type="entry name" value="beta-beta-alpha zinc fingers"/>
    <property type="match status" value="2"/>
</dbReference>
<dbReference type="PROSITE" id="PS00028">
    <property type="entry name" value="ZINC_FINGER_C2H2_1"/>
    <property type="match status" value="2"/>
</dbReference>
<dbReference type="PROSITE" id="PS50157">
    <property type="entry name" value="ZINC_FINGER_C2H2_2"/>
    <property type="match status" value="2"/>
</dbReference>
<sequence>MSEHQDNNNNNTAATAASPSSTVAPVPTPVPQEQLSSQLPAPAAPAPVSAATPVPSVTATAAAATAAVASPPMNGSPRPSEELSCLWQGCSEKCSSAEALYEHICERHVGRKSTNNLNLTCQWGSCRTTTVKRDHITSHIRVHVPLKPHKCEFCGKAFKRPQDLKKHVKTHADDSVLVRSPEPGSRNPDMMFPGGGKGYAAAAHYFEPSLNPVPSQAYGHGAPQYYQAHPPPQPANPSYGNVYYALNHGHDGHASYESKKRGYDALNEFFGDLKRRQFDLHSYAAVGQRLLGLQNLSLPILAGGPLPEYQPMPAPVAVGGGYSPGGHGPPVYHLPPMSNVRTKNDLLNIDQFLQQMQETIYENDDHVAAAGVAQPGAHYVHGGMSYRTTHSPPSQLPPSHATATTSAATMMSHPATHSPSTGTPALTPPSSAQSYTSGRSPISMSSAHRVSPPHHDGGSGMYPRLPSATMADSMTAGYPTTSSAAPPSTLGGIFDDDRRRYTGGTLQRARPEERRLSVDMDIRQDGKEVGDRTPTGKEAGSQSASPVRISANLIDPALHSNSSSDAESALRTAQAATEVAERTDSQWVEKVRLLEYLRNYIASRLDRGEYDADARRALARHSPEMRHDGHMEGVETSHTLTKPEEPAASPAIRSLSDDSVMYPTLRGLGGDEDTKMHS</sequence>
<gene>
    <name type="primary">pacC</name>
</gene>
<proteinExistence type="inferred from homology"/>
<feature type="chain" id="PRO_0000046820" description="pH-response transcription factor pacC/RIM101">
    <location>
        <begin position="1"/>
        <end position="678"/>
    </location>
</feature>
<feature type="zinc finger region" description="C2H2-type 1" evidence="2">
    <location>
        <begin position="83"/>
        <end position="108"/>
    </location>
</feature>
<feature type="zinc finger region" description="C2H2-type 2" evidence="2">
    <location>
        <begin position="119"/>
        <end position="143"/>
    </location>
</feature>
<feature type="zinc finger region" description="C2H2-type 3" evidence="2">
    <location>
        <begin position="149"/>
        <end position="171"/>
    </location>
</feature>
<feature type="region of interest" description="Disordered" evidence="3">
    <location>
        <begin position="1"/>
        <end position="51"/>
    </location>
</feature>
<feature type="region of interest" description="Disordered" evidence="3">
    <location>
        <begin position="381"/>
        <end position="547"/>
    </location>
</feature>
<feature type="region of interest" description="Disordered" evidence="3">
    <location>
        <begin position="621"/>
        <end position="678"/>
    </location>
</feature>
<feature type="short sequence motif" description="YPX[LI] motif 1">
    <location>
        <begin position="462"/>
        <end position="465"/>
    </location>
</feature>
<feature type="short sequence motif" description="YPX[LI] motif 2">
    <location>
        <begin position="662"/>
        <end position="665"/>
    </location>
</feature>
<feature type="compositionally biased region" description="Low complexity" evidence="3">
    <location>
        <begin position="7"/>
        <end position="25"/>
    </location>
</feature>
<feature type="compositionally biased region" description="Low complexity" evidence="3">
    <location>
        <begin position="397"/>
        <end position="416"/>
    </location>
</feature>
<feature type="compositionally biased region" description="Polar residues" evidence="3">
    <location>
        <begin position="417"/>
        <end position="448"/>
    </location>
</feature>
<feature type="compositionally biased region" description="Basic and acidic residues" evidence="3">
    <location>
        <begin position="509"/>
        <end position="535"/>
    </location>
</feature>
<feature type="compositionally biased region" description="Basic and acidic residues" evidence="3">
    <location>
        <begin position="621"/>
        <end position="645"/>
    </location>
</feature>
<protein>
    <recommendedName>
        <fullName>pH-response transcription factor pacC/RIM101</fullName>
    </recommendedName>
</protein>
<accession>Q5XL24</accession>
<name>PACC_ASPGI</name>
<comment type="function">
    <text evidence="1">Transcription factor that mediates regulation of both acid- and alkaline-expressed genes in response to ambient pH. At alkaline ambient pH, activates transcription of alkaline-expressed genes (including pacC itself) and represses transcription of acid-expressed genes (By similarity).</text>
</comment>
<comment type="subcellular location">
    <subcellularLocation>
        <location evidence="1">Cytoplasm</location>
    </subcellularLocation>
    <subcellularLocation>
        <location evidence="1">Nucleus</location>
    </subcellularLocation>
</comment>
<comment type="PTM">
    <text evidence="1">Activated by C-terminal proteolytic cleavage by signaling protease (probably palB/RIM13) at neutral to alkaline ambient pH.</text>
</comment>
<comment type="similarity">
    <text evidence="4">Belongs to the pacC/RIM101 family.</text>
</comment>
<reference key="1">
    <citation type="submission" date="2004-09" db="EMBL/GenBank/DDBJ databases">
        <title>Putative transcription factor PacC of Aspergillus giganteus.</title>
        <authorList>
            <person name="Meyer V."/>
        </authorList>
    </citation>
    <scope>NUCLEOTIDE SEQUENCE [GENOMIC DNA]</scope>
</reference>
<keyword id="KW-0010">Activator</keyword>
<keyword id="KW-0963">Cytoplasm</keyword>
<keyword id="KW-0238">DNA-binding</keyword>
<keyword id="KW-0479">Metal-binding</keyword>
<keyword id="KW-0539">Nucleus</keyword>
<keyword id="KW-0677">Repeat</keyword>
<keyword id="KW-0678">Repressor</keyword>
<keyword id="KW-0804">Transcription</keyword>
<keyword id="KW-0805">Transcription regulation</keyword>
<keyword id="KW-0862">Zinc</keyword>
<keyword id="KW-0863">Zinc-finger</keyword>
<evidence type="ECO:0000250" key="1"/>
<evidence type="ECO:0000255" key="2">
    <source>
        <dbReference type="PROSITE-ProRule" id="PRU00042"/>
    </source>
</evidence>
<evidence type="ECO:0000256" key="3">
    <source>
        <dbReference type="SAM" id="MobiDB-lite"/>
    </source>
</evidence>
<evidence type="ECO:0000305" key="4"/>